<gene>
    <name evidence="1" type="primary">rlmE</name>
    <name evidence="1" type="synonym">ftsJ</name>
    <name evidence="1" type="synonym">rrmJ</name>
    <name type="ordered locus">Smal_1466</name>
</gene>
<comment type="function">
    <text evidence="1">Specifically methylates the uridine in position 2552 of 23S rRNA at the 2'-O position of the ribose in the fully assembled 50S ribosomal subunit.</text>
</comment>
<comment type="catalytic activity">
    <reaction evidence="1">
        <text>uridine(2552) in 23S rRNA + S-adenosyl-L-methionine = 2'-O-methyluridine(2552) in 23S rRNA + S-adenosyl-L-homocysteine + H(+)</text>
        <dbReference type="Rhea" id="RHEA:42720"/>
        <dbReference type="Rhea" id="RHEA-COMP:10202"/>
        <dbReference type="Rhea" id="RHEA-COMP:10203"/>
        <dbReference type="ChEBI" id="CHEBI:15378"/>
        <dbReference type="ChEBI" id="CHEBI:57856"/>
        <dbReference type="ChEBI" id="CHEBI:59789"/>
        <dbReference type="ChEBI" id="CHEBI:65315"/>
        <dbReference type="ChEBI" id="CHEBI:74478"/>
        <dbReference type="EC" id="2.1.1.166"/>
    </reaction>
</comment>
<comment type="subcellular location">
    <subcellularLocation>
        <location evidence="1">Cytoplasm</location>
    </subcellularLocation>
</comment>
<comment type="similarity">
    <text evidence="1">Belongs to the class I-like SAM-binding methyltransferase superfamily. RNA methyltransferase RlmE family.</text>
</comment>
<evidence type="ECO:0000255" key="1">
    <source>
        <dbReference type="HAMAP-Rule" id="MF_01547"/>
    </source>
</evidence>
<evidence type="ECO:0000256" key="2">
    <source>
        <dbReference type="SAM" id="MobiDB-lite"/>
    </source>
</evidence>
<keyword id="KW-0963">Cytoplasm</keyword>
<keyword id="KW-0489">Methyltransferase</keyword>
<keyword id="KW-0698">rRNA processing</keyword>
<keyword id="KW-0949">S-adenosyl-L-methionine</keyword>
<keyword id="KW-0808">Transferase</keyword>
<reference key="1">
    <citation type="submission" date="2008-06" db="EMBL/GenBank/DDBJ databases">
        <title>Complete sequence of Stenotrophomonas maltophilia R551-3.</title>
        <authorList>
            <consortium name="US DOE Joint Genome Institute"/>
            <person name="Lucas S."/>
            <person name="Copeland A."/>
            <person name="Lapidus A."/>
            <person name="Glavina del Rio T."/>
            <person name="Dalin E."/>
            <person name="Tice H."/>
            <person name="Pitluck S."/>
            <person name="Chain P."/>
            <person name="Malfatti S."/>
            <person name="Shin M."/>
            <person name="Vergez L."/>
            <person name="Lang D."/>
            <person name="Schmutz J."/>
            <person name="Larimer F."/>
            <person name="Land M."/>
            <person name="Hauser L."/>
            <person name="Kyrpides N."/>
            <person name="Mikhailova N."/>
            <person name="Taghavi S."/>
            <person name="Monchy S."/>
            <person name="Newman L."/>
            <person name="Vangronsveld J."/>
            <person name="van der Lelie D."/>
            <person name="Richardson P."/>
        </authorList>
    </citation>
    <scope>NUCLEOTIDE SEQUENCE [LARGE SCALE GENOMIC DNA]</scope>
    <source>
        <strain>R551-3</strain>
    </source>
</reference>
<sequence>MATRSKSSQRWLKEHFSDPFVKKAQAEGMRSRAAYKLEELLERDRLLKPHMVVVDLGAAPGGWSQQVRRQIGDTGRVLALDILDMPPLAGVEFLHGDFREETVLSQFEAMLGDQPVDLVLSDMAPNKSGVGAVDQPRMMHLAELALDFADNHLKTGGAFLIKLFQGEGFDDYVRDMRRRYDKVSIRKPEASRKRSPEVYALGQGKRAHMK</sequence>
<name>RLME_STRM5</name>
<proteinExistence type="inferred from homology"/>
<accession>B4SRA0</accession>
<dbReference type="EC" id="2.1.1.166" evidence="1"/>
<dbReference type="EMBL" id="CP001111">
    <property type="protein sequence ID" value="ACF51171.1"/>
    <property type="molecule type" value="Genomic_DNA"/>
</dbReference>
<dbReference type="RefSeq" id="WP_004152870.1">
    <property type="nucleotide sequence ID" value="NC_011071.1"/>
</dbReference>
<dbReference type="SMR" id="B4SRA0"/>
<dbReference type="STRING" id="391008.Smal_1466"/>
<dbReference type="KEGG" id="smt:Smal_1466"/>
<dbReference type="eggNOG" id="COG0293">
    <property type="taxonomic scope" value="Bacteria"/>
</dbReference>
<dbReference type="HOGENOM" id="CLU_009422_4_0_6"/>
<dbReference type="OrthoDB" id="9790080at2"/>
<dbReference type="Proteomes" id="UP000001867">
    <property type="component" value="Chromosome"/>
</dbReference>
<dbReference type="GO" id="GO:0005737">
    <property type="term" value="C:cytoplasm"/>
    <property type="evidence" value="ECO:0007669"/>
    <property type="project" value="UniProtKB-SubCell"/>
</dbReference>
<dbReference type="GO" id="GO:0008650">
    <property type="term" value="F:rRNA (uridine-2'-O-)-methyltransferase activity"/>
    <property type="evidence" value="ECO:0007669"/>
    <property type="project" value="UniProtKB-UniRule"/>
</dbReference>
<dbReference type="FunFam" id="3.40.50.150:FF:000005">
    <property type="entry name" value="Ribosomal RNA large subunit methyltransferase E"/>
    <property type="match status" value="1"/>
</dbReference>
<dbReference type="Gene3D" id="3.40.50.150">
    <property type="entry name" value="Vaccinia Virus protein VP39"/>
    <property type="match status" value="1"/>
</dbReference>
<dbReference type="HAMAP" id="MF_01547">
    <property type="entry name" value="RNA_methyltr_E"/>
    <property type="match status" value="1"/>
</dbReference>
<dbReference type="InterPro" id="IPR050082">
    <property type="entry name" value="RNA_methyltr_RlmE"/>
</dbReference>
<dbReference type="InterPro" id="IPR002877">
    <property type="entry name" value="RNA_MeTrfase_FtsJ_dom"/>
</dbReference>
<dbReference type="InterPro" id="IPR015507">
    <property type="entry name" value="rRNA-MeTfrase_E"/>
</dbReference>
<dbReference type="InterPro" id="IPR029063">
    <property type="entry name" value="SAM-dependent_MTases_sf"/>
</dbReference>
<dbReference type="NCBIfam" id="NF008390">
    <property type="entry name" value="PRK11188.1"/>
    <property type="match status" value="1"/>
</dbReference>
<dbReference type="PANTHER" id="PTHR10920">
    <property type="entry name" value="RIBOSOMAL RNA METHYLTRANSFERASE"/>
    <property type="match status" value="1"/>
</dbReference>
<dbReference type="PANTHER" id="PTHR10920:SF18">
    <property type="entry name" value="RRNA METHYLTRANSFERASE 2, MITOCHONDRIAL"/>
    <property type="match status" value="1"/>
</dbReference>
<dbReference type="Pfam" id="PF01728">
    <property type="entry name" value="FtsJ"/>
    <property type="match status" value="1"/>
</dbReference>
<dbReference type="PIRSF" id="PIRSF005461">
    <property type="entry name" value="23S_rRNA_mtase"/>
    <property type="match status" value="1"/>
</dbReference>
<dbReference type="SUPFAM" id="SSF53335">
    <property type="entry name" value="S-adenosyl-L-methionine-dependent methyltransferases"/>
    <property type="match status" value="1"/>
</dbReference>
<protein>
    <recommendedName>
        <fullName evidence="1">Ribosomal RNA large subunit methyltransferase E</fullName>
        <ecNumber evidence="1">2.1.1.166</ecNumber>
    </recommendedName>
    <alternativeName>
        <fullName evidence="1">23S rRNA Um2552 methyltransferase</fullName>
    </alternativeName>
    <alternativeName>
        <fullName evidence="1">rRNA (uridine-2'-O-)-methyltransferase</fullName>
    </alternativeName>
</protein>
<organism>
    <name type="scientific">Stenotrophomonas maltophilia (strain R551-3)</name>
    <dbReference type="NCBI Taxonomy" id="391008"/>
    <lineage>
        <taxon>Bacteria</taxon>
        <taxon>Pseudomonadati</taxon>
        <taxon>Pseudomonadota</taxon>
        <taxon>Gammaproteobacteria</taxon>
        <taxon>Lysobacterales</taxon>
        <taxon>Lysobacteraceae</taxon>
        <taxon>Stenotrophomonas</taxon>
        <taxon>Stenotrophomonas maltophilia group</taxon>
    </lineage>
</organism>
<feature type="chain" id="PRO_1000195024" description="Ribosomal RNA large subunit methyltransferase E">
    <location>
        <begin position="1"/>
        <end position="210"/>
    </location>
</feature>
<feature type="region of interest" description="Disordered" evidence="2">
    <location>
        <begin position="187"/>
        <end position="210"/>
    </location>
</feature>
<feature type="compositionally biased region" description="Basic and acidic residues" evidence="2">
    <location>
        <begin position="187"/>
        <end position="196"/>
    </location>
</feature>
<feature type="active site" description="Proton acceptor" evidence="1">
    <location>
        <position position="162"/>
    </location>
</feature>
<feature type="binding site" evidence="1">
    <location>
        <position position="61"/>
    </location>
    <ligand>
        <name>S-adenosyl-L-methionine</name>
        <dbReference type="ChEBI" id="CHEBI:59789"/>
    </ligand>
</feature>
<feature type="binding site" evidence="1">
    <location>
        <position position="63"/>
    </location>
    <ligand>
        <name>S-adenosyl-L-methionine</name>
        <dbReference type="ChEBI" id="CHEBI:59789"/>
    </ligand>
</feature>
<feature type="binding site" evidence="1">
    <location>
        <position position="81"/>
    </location>
    <ligand>
        <name>S-adenosyl-L-methionine</name>
        <dbReference type="ChEBI" id="CHEBI:59789"/>
    </ligand>
</feature>
<feature type="binding site" evidence="1">
    <location>
        <position position="97"/>
    </location>
    <ligand>
        <name>S-adenosyl-L-methionine</name>
        <dbReference type="ChEBI" id="CHEBI:59789"/>
    </ligand>
</feature>
<feature type="binding site" evidence="1">
    <location>
        <position position="122"/>
    </location>
    <ligand>
        <name>S-adenosyl-L-methionine</name>
        <dbReference type="ChEBI" id="CHEBI:59789"/>
    </ligand>
</feature>